<feature type="chain" id="PRO_1000085159" description="Chaperone protein DnaJ">
    <location>
        <begin position="1"/>
        <end position="376"/>
    </location>
</feature>
<feature type="domain" description="J" evidence="1">
    <location>
        <begin position="5"/>
        <end position="70"/>
    </location>
</feature>
<feature type="repeat" description="CXXCXGXG motif">
    <location>
        <begin position="149"/>
        <end position="156"/>
    </location>
</feature>
<feature type="repeat" description="CXXCXGXG motif">
    <location>
        <begin position="166"/>
        <end position="173"/>
    </location>
</feature>
<feature type="repeat" description="CXXCXGXG motif">
    <location>
        <begin position="188"/>
        <end position="195"/>
    </location>
</feature>
<feature type="repeat" description="CXXCXGXG motif">
    <location>
        <begin position="202"/>
        <end position="209"/>
    </location>
</feature>
<feature type="zinc finger region" description="CR-type" evidence="1">
    <location>
        <begin position="136"/>
        <end position="214"/>
    </location>
</feature>
<feature type="binding site" evidence="1">
    <location>
        <position position="149"/>
    </location>
    <ligand>
        <name>Zn(2+)</name>
        <dbReference type="ChEBI" id="CHEBI:29105"/>
        <label>1</label>
    </ligand>
</feature>
<feature type="binding site" evidence="1">
    <location>
        <position position="152"/>
    </location>
    <ligand>
        <name>Zn(2+)</name>
        <dbReference type="ChEBI" id="CHEBI:29105"/>
        <label>1</label>
    </ligand>
</feature>
<feature type="binding site" evidence="1">
    <location>
        <position position="166"/>
    </location>
    <ligand>
        <name>Zn(2+)</name>
        <dbReference type="ChEBI" id="CHEBI:29105"/>
        <label>2</label>
    </ligand>
</feature>
<feature type="binding site" evidence="1">
    <location>
        <position position="169"/>
    </location>
    <ligand>
        <name>Zn(2+)</name>
        <dbReference type="ChEBI" id="CHEBI:29105"/>
        <label>2</label>
    </ligand>
</feature>
<feature type="binding site" evidence="1">
    <location>
        <position position="188"/>
    </location>
    <ligand>
        <name>Zn(2+)</name>
        <dbReference type="ChEBI" id="CHEBI:29105"/>
        <label>2</label>
    </ligand>
</feature>
<feature type="binding site" evidence="1">
    <location>
        <position position="191"/>
    </location>
    <ligand>
        <name>Zn(2+)</name>
        <dbReference type="ChEBI" id="CHEBI:29105"/>
        <label>2</label>
    </ligand>
</feature>
<feature type="binding site" evidence="1">
    <location>
        <position position="202"/>
    </location>
    <ligand>
        <name>Zn(2+)</name>
        <dbReference type="ChEBI" id="CHEBI:29105"/>
        <label>1</label>
    </ligand>
</feature>
<feature type="binding site" evidence="1">
    <location>
        <position position="205"/>
    </location>
    <ligand>
        <name>Zn(2+)</name>
        <dbReference type="ChEBI" id="CHEBI:29105"/>
        <label>1</label>
    </ligand>
</feature>
<proteinExistence type="inferred from homology"/>
<name>DNAJ_BURMS</name>
<protein>
    <recommendedName>
        <fullName evidence="1">Chaperone protein DnaJ</fullName>
    </recommendedName>
</protein>
<dbReference type="EMBL" id="CP000526">
    <property type="protein sequence ID" value="ABM52643.1"/>
    <property type="molecule type" value="Genomic_DNA"/>
</dbReference>
<dbReference type="RefSeq" id="WP_004194374.1">
    <property type="nucleotide sequence ID" value="NC_008785.1"/>
</dbReference>
<dbReference type="SMR" id="A1V0U8"/>
<dbReference type="GeneID" id="92980017"/>
<dbReference type="KEGG" id="bmv:BMASAVP1_A0502"/>
<dbReference type="HOGENOM" id="CLU_017633_0_7_4"/>
<dbReference type="GO" id="GO:0005737">
    <property type="term" value="C:cytoplasm"/>
    <property type="evidence" value="ECO:0007669"/>
    <property type="project" value="UniProtKB-SubCell"/>
</dbReference>
<dbReference type="GO" id="GO:0005524">
    <property type="term" value="F:ATP binding"/>
    <property type="evidence" value="ECO:0007669"/>
    <property type="project" value="InterPro"/>
</dbReference>
<dbReference type="GO" id="GO:0031072">
    <property type="term" value="F:heat shock protein binding"/>
    <property type="evidence" value="ECO:0007669"/>
    <property type="project" value="InterPro"/>
</dbReference>
<dbReference type="GO" id="GO:0051082">
    <property type="term" value="F:unfolded protein binding"/>
    <property type="evidence" value="ECO:0007669"/>
    <property type="project" value="UniProtKB-UniRule"/>
</dbReference>
<dbReference type="GO" id="GO:0008270">
    <property type="term" value="F:zinc ion binding"/>
    <property type="evidence" value="ECO:0007669"/>
    <property type="project" value="UniProtKB-UniRule"/>
</dbReference>
<dbReference type="GO" id="GO:0051085">
    <property type="term" value="P:chaperone cofactor-dependent protein refolding"/>
    <property type="evidence" value="ECO:0007669"/>
    <property type="project" value="TreeGrafter"/>
</dbReference>
<dbReference type="GO" id="GO:0006260">
    <property type="term" value="P:DNA replication"/>
    <property type="evidence" value="ECO:0007669"/>
    <property type="project" value="UniProtKB-KW"/>
</dbReference>
<dbReference type="GO" id="GO:0042026">
    <property type="term" value="P:protein refolding"/>
    <property type="evidence" value="ECO:0007669"/>
    <property type="project" value="TreeGrafter"/>
</dbReference>
<dbReference type="GO" id="GO:0009408">
    <property type="term" value="P:response to heat"/>
    <property type="evidence" value="ECO:0007669"/>
    <property type="project" value="InterPro"/>
</dbReference>
<dbReference type="CDD" id="cd06257">
    <property type="entry name" value="DnaJ"/>
    <property type="match status" value="1"/>
</dbReference>
<dbReference type="CDD" id="cd10747">
    <property type="entry name" value="DnaJ_C"/>
    <property type="match status" value="1"/>
</dbReference>
<dbReference type="CDD" id="cd10719">
    <property type="entry name" value="DnaJ_zf"/>
    <property type="match status" value="1"/>
</dbReference>
<dbReference type="FunFam" id="1.10.287.110:FF:000031">
    <property type="entry name" value="Molecular chaperone DnaJ"/>
    <property type="match status" value="1"/>
</dbReference>
<dbReference type="FunFam" id="2.10.230.10:FF:000002">
    <property type="entry name" value="Molecular chaperone DnaJ"/>
    <property type="match status" value="1"/>
</dbReference>
<dbReference type="FunFam" id="2.60.260.20:FF:000004">
    <property type="entry name" value="Molecular chaperone DnaJ"/>
    <property type="match status" value="1"/>
</dbReference>
<dbReference type="Gene3D" id="1.10.287.110">
    <property type="entry name" value="DnaJ domain"/>
    <property type="match status" value="1"/>
</dbReference>
<dbReference type="Gene3D" id="2.10.230.10">
    <property type="entry name" value="Heat shock protein DnaJ, cysteine-rich domain"/>
    <property type="match status" value="1"/>
</dbReference>
<dbReference type="Gene3D" id="2.60.260.20">
    <property type="entry name" value="Urease metallochaperone UreE, N-terminal domain"/>
    <property type="match status" value="2"/>
</dbReference>
<dbReference type="HAMAP" id="MF_01152">
    <property type="entry name" value="DnaJ"/>
    <property type="match status" value="1"/>
</dbReference>
<dbReference type="InterPro" id="IPR012724">
    <property type="entry name" value="DnaJ"/>
</dbReference>
<dbReference type="InterPro" id="IPR002939">
    <property type="entry name" value="DnaJ_C"/>
</dbReference>
<dbReference type="InterPro" id="IPR001623">
    <property type="entry name" value="DnaJ_domain"/>
</dbReference>
<dbReference type="InterPro" id="IPR018253">
    <property type="entry name" value="DnaJ_domain_CS"/>
</dbReference>
<dbReference type="InterPro" id="IPR008971">
    <property type="entry name" value="HSP40/DnaJ_pept-bd"/>
</dbReference>
<dbReference type="InterPro" id="IPR001305">
    <property type="entry name" value="HSP_DnaJ_Cys-rich_dom"/>
</dbReference>
<dbReference type="InterPro" id="IPR036410">
    <property type="entry name" value="HSP_DnaJ_Cys-rich_dom_sf"/>
</dbReference>
<dbReference type="InterPro" id="IPR036869">
    <property type="entry name" value="J_dom_sf"/>
</dbReference>
<dbReference type="NCBIfam" id="TIGR02349">
    <property type="entry name" value="DnaJ_bact"/>
    <property type="match status" value="1"/>
</dbReference>
<dbReference type="NCBIfam" id="NF008035">
    <property type="entry name" value="PRK10767.1"/>
    <property type="match status" value="1"/>
</dbReference>
<dbReference type="PANTHER" id="PTHR43096:SF48">
    <property type="entry name" value="CHAPERONE PROTEIN DNAJ"/>
    <property type="match status" value="1"/>
</dbReference>
<dbReference type="PANTHER" id="PTHR43096">
    <property type="entry name" value="DNAJ HOMOLOG 1, MITOCHONDRIAL-RELATED"/>
    <property type="match status" value="1"/>
</dbReference>
<dbReference type="Pfam" id="PF00226">
    <property type="entry name" value="DnaJ"/>
    <property type="match status" value="1"/>
</dbReference>
<dbReference type="Pfam" id="PF01556">
    <property type="entry name" value="DnaJ_C"/>
    <property type="match status" value="1"/>
</dbReference>
<dbReference type="Pfam" id="PF00684">
    <property type="entry name" value="DnaJ_CXXCXGXG"/>
    <property type="match status" value="1"/>
</dbReference>
<dbReference type="PRINTS" id="PR00625">
    <property type="entry name" value="JDOMAIN"/>
</dbReference>
<dbReference type="SMART" id="SM00271">
    <property type="entry name" value="DnaJ"/>
    <property type="match status" value="1"/>
</dbReference>
<dbReference type="SUPFAM" id="SSF46565">
    <property type="entry name" value="Chaperone J-domain"/>
    <property type="match status" value="1"/>
</dbReference>
<dbReference type="SUPFAM" id="SSF57938">
    <property type="entry name" value="DnaJ/Hsp40 cysteine-rich domain"/>
    <property type="match status" value="1"/>
</dbReference>
<dbReference type="SUPFAM" id="SSF49493">
    <property type="entry name" value="HSP40/DnaJ peptide-binding domain"/>
    <property type="match status" value="2"/>
</dbReference>
<dbReference type="PROSITE" id="PS00636">
    <property type="entry name" value="DNAJ_1"/>
    <property type="match status" value="1"/>
</dbReference>
<dbReference type="PROSITE" id="PS50076">
    <property type="entry name" value="DNAJ_2"/>
    <property type="match status" value="1"/>
</dbReference>
<dbReference type="PROSITE" id="PS51188">
    <property type="entry name" value="ZF_CR"/>
    <property type="match status" value="1"/>
</dbReference>
<organism>
    <name type="scientific">Burkholderia mallei (strain SAVP1)</name>
    <dbReference type="NCBI Taxonomy" id="320388"/>
    <lineage>
        <taxon>Bacteria</taxon>
        <taxon>Pseudomonadati</taxon>
        <taxon>Pseudomonadota</taxon>
        <taxon>Betaproteobacteria</taxon>
        <taxon>Burkholderiales</taxon>
        <taxon>Burkholderiaceae</taxon>
        <taxon>Burkholderia</taxon>
        <taxon>pseudomallei group</taxon>
    </lineage>
</organism>
<keyword id="KW-0143">Chaperone</keyword>
<keyword id="KW-0963">Cytoplasm</keyword>
<keyword id="KW-0235">DNA replication</keyword>
<keyword id="KW-0479">Metal-binding</keyword>
<keyword id="KW-0677">Repeat</keyword>
<keyword id="KW-0346">Stress response</keyword>
<keyword id="KW-0862">Zinc</keyword>
<keyword id="KW-0863">Zinc-finger</keyword>
<accession>A1V0U8</accession>
<comment type="function">
    <text evidence="1">Participates actively in the response to hyperosmotic and heat shock by preventing the aggregation of stress-denatured proteins and by disaggregating proteins, also in an autonomous, DnaK-independent fashion. Unfolded proteins bind initially to DnaJ; upon interaction with the DnaJ-bound protein, DnaK hydrolyzes its bound ATP, resulting in the formation of a stable complex. GrpE releases ADP from DnaK; ATP binding to DnaK triggers the release of the substrate protein, thus completing the reaction cycle. Several rounds of ATP-dependent interactions between DnaJ, DnaK and GrpE are required for fully efficient folding. Also involved, together with DnaK and GrpE, in the DNA replication of plasmids through activation of initiation proteins.</text>
</comment>
<comment type="cofactor">
    <cofactor evidence="1">
        <name>Zn(2+)</name>
        <dbReference type="ChEBI" id="CHEBI:29105"/>
    </cofactor>
    <text evidence="1">Binds 2 Zn(2+) ions per monomer.</text>
</comment>
<comment type="subunit">
    <text evidence="1">Homodimer.</text>
</comment>
<comment type="subcellular location">
    <subcellularLocation>
        <location evidence="1">Cytoplasm</location>
    </subcellularLocation>
</comment>
<comment type="domain">
    <text evidence="1">The J domain is necessary and sufficient to stimulate DnaK ATPase activity. Zinc center 1 plays an important role in the autonomous, DnaK-independent chaperone activity of DnaJ. Zinc center 2 is essential for interaction with DnaK and for DnaJ activity.</text>
</comment>
<comment type="similarity">
    <text evidence="1">Belongs to the DnaJ family.</text>
</comment>
<evidence type="ECO:0000255" key="1">
    <source>
        <dbReference type="HAMAP-Rule" id="MF_01152"/>
    </source>
</evidence>
<sequence length="376" mass="40549">MAKRDYYEVLGVAKNASDDEIKKAYRKLAMKYHPDRNPDSKDAEEHFKEAKEAYEMLSDGQKRAAYDQYGHAGVDPNVGAAGAQGFGGFADAFGDIFGDIFGQAAGGGRARGGPQVYRGADLRYSMEITLEQAAHGYDTQIRVPSWAACGVCHGSGAKPGTKPETCPTCHGQGTVRMSQGFFSIQQTCPKCHGTGTYIPEPCAHCHGSGKVKETKTLEVKIPAGIDDGMRIRSAGNGEPGINGGPSGDLYVEIHIKPHAVFERDGDDLHCQMPIPFTTAALGGEIEVPTLAGRASFTVPEGTQSGKTFRLRGKGIKGLHSSIAGDLYVHVQVETPVKLTDQQRDLLKQFEKSLAEGGPRHSPQSKSWFDRVKSFFE</sequence>
<reference key="1">
    <citation type="journal article" date="2010" name="Genome Biol. Evol.">
        <title>Continuing evolution of Burkholderia mallei through genome reduction and large-scale rearrangements.</title>
        <authorList>
            <person name="Losada L."/>
            <person name="Ronning C.M."/>
            <person name="DeShazer D."/>
            <person name="Woods D."/>
            <person name="Fedorova N."/>
            <person name="Kim H.S."/>
            <person name="Shabalina S.A."/>
            <person name="Pearson T.R."/>
            <person name="Brinkac L."/>
            <person name="Tan P."/>
            <person name="Nandi T."/>
            <person name="Crabtree J."/>
            <person name="Badger J."/>
            <person name="Beckstrom-Sternberg S."/>
            <person name="Saqib M."/>
            <person name="Schutzer S.E."/>
            <person name="Keim P."/>
            <person name="Nierman W.C."/>
        </authorList>
    </citation>
    <scope>NUCLEOTIDE SEQUENCE [LARGE SCALE GENOMIC DNA]</scope>
    <source>
        <strain>SAVP1</strain>
    </source>
</reference>
<gene>
    <name evidence="1" type="primary">dnaJ</name>
    <name type="ordered locus">BMASAVP1_A0502</name>
</gene>